<organism>
    <name type="scientific">Mus musculus</name>
    <name type="common">Mouse</name>
    <dbReference type="NCBI Taxonomy" id="10090"/>
    <lineage>
        <taxon>Eukaryota</taxon>
        <taxon>Metazoa</taxon>
        <taxon>Chordata</taxon>
        <taxon>Craniata</taxon>
        <taxon>Vertebrata</taxon>
        <taxon>Euteleostomi</taxon>
        <taxon>Mammalia</taxon>
        <taxon>Eutheria</taxon>
        <taxon>Euarchontoglires</taxon>
        <taxon>Glires</taxon>
        <taxon>Rodentia</taxon>
        <taxon>Myomorpha</taxon>
        <taxon>Muroidea</taxon>
        <taxon>Muridae</taxon>
        <taxon>Murinae</taxon>
        <taxon>Mus</taxon>
        <taxon>Mus</taxon>
    </lineage>
</organism>
<reference key="1">
    <citation type="journal article" date="2005" name="Science">
        <title>The transcriptional landscape of the mammalian genome.</title>
        <authorList>
            <person name="Carninci P."/>
            <person name="Kasukawa T."/>
            <person name="Katayama S."/>
            <person name="Gough J."/>
            <person name="Frith M.C."/>
            <person name="Maeda N."/>
            <person name="Oyama R."/>
            <person name="Ravasi T."/>
            <person name="Lenhard B."/>
            <person name="Wells C."/>
            <person name="Kodzius R."/>
            <person name="Shimokawa K."/>
            <person name="Bajic V.B."/>
            <person name="Brenner S.E."/>
            <person name="Batalov S."/>
            <person name="Forrest A.R."/>
            <person name="Zavolan M."/>
            <person name="Davis M.J."/>
            <person name="Wilming L.G."/>
            <person name="Aidinis V."/>
            <person name="Allen J.E."/>
            <person name="Ambesi-Impiombato A."/>
            <person name="Apweiler R."/>
            <person name="Aturaliya R.N."/>
            <person name="Bailey T.L."/>
            <person name="Bansal M."/>
            <person name="Baxter L."/>
            <person name="Beisel K.W."/>
            <person name="Bersano T."/>
            <person name="Bono H."/>
            <person name="Chalk A.M."/>
            <person name="Chiu K.P."/>
            <person name="Choudhary V."/>
            <person name="Christoffels A."/>
            <person name="Clutterbuck D.R."/>
            <person name="Crowe M.L."/>
            <person name="Dalla E."/>
            <person name="Dalrymple B.P."/>
            <person name="de Bono B."/>
            <person name="Della Gatta G."/>
            <person name="di Bernardo D."/>
            <person name="Down T."/>
            <person name="Engstrom P."/>
            <person name="Fagiolini M."/>
            <person name="Faulkner G."/>
            <person name="Fletcher C.F."/>
            <person name="Fukushima T."/>
            <person name="Furuno M."/>
            <person name="Futaki S."/>
            <person name="Gariboldi M."/>
            <person name="Georgii-Hemming P."/>
            <person name="Gingeras T.R."/>
            <person name="Gojobori T."/>
            <person name="Green R.E."/>
            <person name="Gustincich S."/>
            <person name="Harbers M."/>
            <person name="Hayashi Y."/>
            <person name="Hensch T.K."/>
            <person name="Hirokawa N."/>
            <person name="Hill D."/>
            <person name="Huminiecki L."/>
            <person name="Iacono M."/>
            <person name="Ikeo K."/>
            <person name="Iwama A."/>
            <person name="Ishikawa T."/>
            <person name="Jakt M."/>
            <person name="Kanapin A."/>
            <person name="Katoh M."/>
            <person name="Kawasawa Y."/>
            <person name="Kelso J."/>
            <person name="Kitamura H."/>
            <person name="Kitano H."/>
            <person name="Kollias G."/>
            <person name="Krishnan S.P."/>
            <person name="Kruger A."/>
            <person name="Kummerfeld S.K."/>
            <person name="Kurochkin I.V."/>
            <person name="Lareau L.F."/>
            <person name="Lazarevic D."/>
            <person name="Lipovich L."/>
            <person name="Liu J."/>
            <person name="Liuni S."/>
            <person name="McWilliam S."/>
            <person name="Madan Babu M."/>
            <person name="Madera M."/>
            <person name="Marchionni L."/>
            <person name="Matsuda H."/>
            <person name="Matsuzawa S."/>
            <person name="Miki H."/>
            <person name="Mignone F."/>
            <person name="Miyake S."/>
            <person name="Morris K."/>
            <person name="Mottagui-Tabar S."/>
            <person name="Mulder N."/>
            <person name="Nakano N."/>
            <person name="Nakauchi H."/>
            <person name="Ng P."/>
            <person name="Nilsson R."/>
            <person name="Nishiguchi S."/>
            <person name="Nishikawa S."/>
            <person name="Nori F."/>
            <person name="Ohara O."/>
            <person name="Okazaki Y."/>
            <person name="Orlando V."/>
            <person name="Pang K.C."/>
            <person name="Pavan W.J."/>
            <person name="Pavesi G."/>
            <person name="Pesole G."/>
            <person name="Petrovsky N."/>
            <person name="Piazza S."/>
            <person name="Reed J."/>
            <person name="Reid J.F."/>
            <person name="Ring B.Z."/>
            <person name="Ringwald M."/>
            <person name="Rost B."/>
            <person name="Ruan Y."/>
            <person name="Salzberg S.L."/>
            <person name="Sandelin A."/>
            <person name="Schneider C."/>
            <person name="Schoenbach C."/>
            <person name="Sekiguchi K."/>
            <person name="Semple C.A."/>
            <person name="Seno S."/>
            <person name="Sessa L."/>
            <person name="Sheng Y."/>
            <person name="Shibata Y."/>
            <person name="Shimada H."/>
            <person name="Shimada K."/>
            <person name="Silva D."/>
            <person name="Sinclair B."/>
            <person name="Sperling S."/>
            <person name="Stupka E."/>
            <person name="Sugiura K."/>
            <person name="Sultana R."/>
            <person name="Takenaka Y."/>
            <person name="Taki K."/>
            <person name="Tammoja K."/>
            <person name="Tan S.L."/>
            <person name="Tang S."/>
            <person name="Taylor M.S."/>
            <person name="Tegner J."/>
            <person name="Teichmann S.A."/>
            <person name="Ueda H.R."/>
            <person name="van Nimwegen E."/>
            <person name="Verardo R."/>
            <person name="Wei C.L."/>
            <person name="Yagi K."/>
            <person name="Yamanishi H."/>
            <person name="Zabarovsky E."/>
            <person name="Zhu S."/>
            <person name="Zimmer A."/>
            <person name="Hide W."/>
            <person name="Bult C."/>
            <person name="Grimmond S.M."/>
            <person name="Teasdale R.D."/>
            <person name="Liu E.T."/>
            <person name="Brusic V."/>
            <person name="Quackenbush J."/>
            <person name="Wahlestedt C."/>
            <person name="Mattick J.S."/>
            <person name="Hume D.A."/>
            <person name="Kai C."/>
            <person name="Sasaki D."/>
            <person name="Tomaru Y."/>
            <person name="Fukuda S."/>
            <person name="Kanamori-Katayama M."/>
            <person name="Suzuki M."/>
            <person name="Aoki J."/>
            <person name="Arakawa T."/>
            <person name="Iida J."/>
            <person name="Imamura K."/>
            <person name="Itoh M."/>
            <person name="Kato T."/>
            <person name="Kawaji H."/>
            <person name="Kawagashira N."/>
            <person name="Kawashima T."/>
            <person name="Kojima M."/>
            <person name="Kondo S."/>
            <person name="Konno H."/>
            <person name="Nakano K."/>
            <person name="Ninomiya N."/>
            <person name="Nishio T."/>
            <person name="Okada M."/>
            <person name="Plessy C."/>
            <person name="Shibata K."/>
            <person name="Shiraki T."/>
            <person name="Suzuki S."/>
            <person name="Tagami M."/>
            <person name="Waki K."/>
            <person name="Watahiki A."/>
            <person name="Okamura-Oho Y."/>
            <person name="Suzuki H."/>
            <person name="Kawai J."/>
            <person name="Hayashizaki Y."/>
        </authorList>
    </citation>
    <scope>NUCLEOTIDE SEQUENCE [LARGE SCALE MRNA]</scope>
    <source>
        <strain>C57BL/6J</strain>
        <tissue>Bone</tissue>
        <tissue>Lung</tissue>
        <tissue>Pancreas</tissue>
    </source>
</reference>
<reference key="2">
    <citation type="journal article" date="2009" name="PLoS Biol.">
        <title>Lineage-specific biology revealed by a finished genome assembly of the mouse.</title>
        <authorList>
            <person name="Church D.M."/>
            <person name="Goodstadt L."/>
            <person name="Hillier L.W."/>
            <person name="Zody M.C."/>
            <person name="Goldstein S."/>
            <person name="She X."/>
            <person name="Bult C.J."/>
            <person name="Agarwala R."/>
            <person name="Cherry J.L."/>
            <person name="DiCuccio M."/>
            <person name="Hlavina W."/>
            <person name="Kapustin Y."/>
            <person name="Meric P."/>
            <person name="Maglott D."/>
            <person name="Birtle Z."/>
            <person name="Marques A.C."/>
            <person name="Graves T."/>
            <person name="Zhou S."/>
            <person name="Teague B."/>
            <person name="Potamousis K."/>
            <person name="Churas C."/>
            <person name="Place M."/>
            <person name="Herschleb J."/>
            <person name="Runnheim R."/>
            <person name="Forrest D."/>
            <person name="Amos-Landgraf J."/>
            <person name="Schwartz D.C."/>
            <person name="Cheng Z."/>
            <person name="Lindblad-Toh K."/>
            <person name="Eichler E.E."/>
            <person name="Ponting C.P."/>
        </authorList>
    </citation>
    <scope>NUCLEOTIDE SEQUENCE [LARGE SCALE GENOMIC DNA]</scope>
    <source>
        <strain>C57BL/6J</strain>
    </source>
</reference>
<reference key="3">
    <citation type="submission" date="2007-06" db="EMBL/GenBank/DDBJ databases">
        <authorList>
            <person name="Mural R.J."/>
            <person name="Adams M.D."/>
            <person name="Myers E.W."/>
            <person name="Smith H.O."/>
            <person name="Venter J.C."/>
        </authorList>
    </citation>
    <scope>NUCLEOTIDE SEQUENCE [LARGE SCALE GENOMIC DNA]</scope>
</reference>
<gene>
    <name evidence="5" type="primary">Mcemp1</name>
</gene>
<accession>Q9D8U6</accession>
<feature type="chain" id="PRO_0000358923" description="Mast cell-expressed membrane protein 1">
    <location>
        <begin position="1"/>
        <end position="183"/>
    </location>
</feature>
<feature type="topological domain" description="Cytoplasmic" evidence="2">
    <location>
        <begin position="1"/>
        <end position="70"/>
    </location>
</feature>
<feature type="transmembrane region" description="Helical; Signal-anchor for type II membrane protein" evidence="2">
    <location>
        <begin position="71"/>
        <end position="91"/>
    </location>
</feature>
<feature type="topological domain" description="Extracellular" evidence="2">
    <location>
        <begin position="92"/>
        <end position="183"/>
    </location>
</feature>
<feature type="region of interest" description="Disordered" evidence="3">
    <location>
        <begin position="1"/>
        <end position="26"/>
    </location>
</feature>
<feature type="compositionally biased region" description="Basic and acidic residues" evidence="3">
    <location>
        <begin position="15"/>
        <end position="24"/>
    </location>
</feature>
<feature type="glycosylation site" description="N-linked (GlcNAc...) asparagine" evidence="2">
    <location>
        <position position="109"/>
    </location>
</feature>
<protein>
    <recommendedName>
        <fullName evidence="4">Mast cell-expressed membrane protein 1</fullName>
    </recommendedName>
</protein>
<comment type="subcellular location">
    <subcellularLocation>
        <location evidence="1">Membrane</location>
        <topology evidence="1">Single-pass type II membrane protein</topology>
    </subcellularLocation>
</comment>
<evidence type="ECO:0000250" key="1">
    <source>
        <dbReference type="UniProtKB" id="Q8IX19"/>
    </source>
</evidence>
<evidence type="ECO:0000255" key="2"/>
<evidence type="ECO:0000256" key="3">
    <source>
        <dbReference type="SAM" id="MobiDB-lite"/>
    </source>
</evidence>
<evidence type="ECO:0000305" key="4"/>
<evidence type="ECO:0000312" key="5">
    <source>
        <dbReference type="MGI" id="MGI:1916439"/>
    </source>
</evidence>
<name>MCEM1_MOUSE</name>
<keyword id="KW-0325">Glycoprotein</keyword>
<keyword id="KW-0472">Membrane</keyword>
<keyword id="KW-1185">Reference proteome</keyword>
<keyword id="KW-0735">Signal-anchor</keyword>
<keyword id="KW-0812">Transmembrane</keyword>
<keyword id="KW-1133">Transmembrane helix</keyword>
<sequence>MHASASQDKNRRKPGHDEGAHNPDYENITLAFRNKDQLKLSQSTPTKQAKFKTSLDPAESPPWLYRTIMMLYVLLALVFLSCIVLSALVLVKNSEMSKELWTLKAELSNVSDTVWNIRELQNQQTRIWEAAQGDIKEVKKTLGTVMSSIQTGNDRLKTVPADITQIKKTLEALEKKAQPQPST</sequence>
<dbReference type="EMBL" id="AK007679">
    <property type="protein sequence ID" value="BAB25183.1"/>
    <property type="molecule type" value="mRNA"/>
</dbReference>
<dbReference type="EMBL" id="AK036449">
    <property type="protein sequence ID" value="BAC29434.1"/>
    <property type="molecule type" value="mRNA"/>
</dbReference>
<dbReference type="EMBL" id="AK087121">
    <property type="protein sequence ID" value="BAC39808.1"/>
    <property type="molecule type" value="mRNA"/>
</dbReference>
<dbReference type="EMBL" id="AC087183">
    <property type="status" value="NOT_ANNOTATED_CDS"/>
    <property type="molecule type" value="Genomic_DNA"/>
</dbReference>
<dbReference type="EMBL" id="CH466566">
    <property type="protein sequence ID" value="EDL21944.1"/>
    <property type="molecule type" value="Genomic_DNA"/>
</dbReference>
<dbReference type="CCDS" id="CCDS22069.1"/>
<dbReference type="RefSeq" id="NP_081261.1">
    <property type="nucleotide sequence ID" value="NM_026985.2"/>
</dbReference>
<dbReference type="SMR" id="Q9D8U6"/>
<dbReference type="BioGRID" id="213281">
    <property type="interactions" value="1"/>
</dbReference>
<dbReference type="FunCoup" id="Q9D8U6">
    <property type="interactions" value="2"/>
</dbReference>
<dbReference type="STRING" id="10090.ENSMUSP00000014118"/>
<dbReference type="GlyCosmos" id="Q9D8U6">
    <property type="glycosylation" value="1 site, No reported glycans"/>
</dbReference>
<dbReference type="GlyGen" id="Q9D8U6">
    <property type="glycosylation" value="2 sites, 1 O-linked glycan (1 site)"/>
</dbReference>
<dbReference type="iPTMnet" id="Q9D8U6"/>
<dbReference type="PhosphoSitePlus" id="Q9D8U6"/>
<dbReference type="PaxDb" id="10090-ENSMUSP00000014118"/>
<dbReference type="ProteomicsDB" id="252742"/>
<dbReference type="Antibodypedia" id="2676">
    <property type="antibodies" value="23 antibodies from 15 providers"/>
</dbReference>
<dbReference type="DNASU" id="69189"/>
<dbReference type="Ensembl" id="ENSMUST00000014118.4">
    <property type="protein sequence ID" value="ENSMUSP00000014118.3"/>
    <property type="gene ID" value="ENSMUSG00000013974.4"/>
</dbReference>
<dbReference type="GeneID" id="69189"/>
<dbReference type="KEGG" id="mmu:69189"/>
<dbReference type="UCSC" id="uc009ksi.1">
    <property type="organism name" value="mouse"/>
</dbReference>
<dbReference type="AGR" id="MGI:1916439"/>
<dbReference type="CTD" id="199675"/>
<dbReference type="MGI" id="MGI:1916439">
    <property type="gene designation" value="Mcemp1"/>
</dbReference>
<dbReference type="VEuPathDB" id="HostDB:ENSMUSG00000013974"/>
<dbReference type="eggNOG" id="ENOG502RTYW">
    <property type="taxonomic scope" value="Eukaryota"/>
</dbReference>
<dbReference type="GeneTree" id="ENSGT00390000007959"/>
<dbReference type="HOGENOM" id="CLU_125266_0_0_1"/>
<dbReference type="InParanoid" id="Q9D8U6"/>
<dbReference type="OMA" id="WLQRSIM"/>
<dbReference type="OrthoDB" id="9837482at2759"/>
<dbReference type="PhylomeDB" id="Q9D8U6"/>
<dbReference type="TreeFam" id="TF337063"/>
<dbReference type="Reactome" id="R-MMU-6798695">
    <property type="pathway name" value="Neutrophil degranulation"/>
</dbReference>
<dbReference type="BioGRID-ORCS" id="69189">
    <property type="hits" value="1 hit in 80 CRISPR screens"/>
</dbReference>
<dbReference type="PRO" id="PR:Q9D8U6"/>
<dbReference type="Proteomes" id="UP000000589">
    <property type="component" value="Chromosome 8"/>
</dbReference>
<dbReference type="RNAct" id="Q9D8U6">
    <property type="molecule type" value="protein"/>
</dbReference>
<dbReference type="Bgee" id="ENSMUSG00000013974">
    <property type="expression patterns" value="Expressed in granulocyte and 41 other cell types or tissues"/>
</dbReference>
<dbReference type="GO" id="GO:0009986">
    <property type="term" value="C:cell surface"/>
    <property type="evidence" value="ECO:0000314"/>
    <property type="project" value="MGI"/>
</dbReference>
<dbReference type="GO" id="GO:0016020">
    <property type="term" value="C:membrane"/>
    <property type="evidence" value="ECO:0007669"/>
    <property type="project" value="UniProtKB-SubCell"/>
</dbReference>
<dbReference type="GO" id="GO:0032991">
    <property type="term" value="C:protein-containing complex"/>
    <property type="evidence" value="ECO:0000314"/>
    <property type="project" value="MGI"/>
</dbReference>
<dbReference type="GO" id="GO:0006954">
    <property type="term" value="P:inflammatory response"/>
    <property type="evidence" value="ECO:0000315"/>
    <property type="project" value="MGI"/>
</dbReference>
<dbReference type="GO" id="GO:0038109">
    <property type="term" value="P:Kit signaling pathway"/>
    <property type="evidence" value="ECO:0000315"/>
    <property type="project" value="MGI"/>
</dbReference>
<dbReference type="GO" id="GO:0070662">
    <property type="term" value="P:mast cell proliferation"/>
    <property type="evidence" value="ECO:0000315"/>
    <property type="project" value="MGI"/>
</dbReference>
<dbReference type="InterPro" id="IPR038818">
    <property type="entry name" value="MCEMP1"/>
</dbReference>
<dbReference type="PANTHER" id="PTHR37856">
    <property type="entry name" value="MAST CELL-EXPRESSED MEMBRANE PROTEIN 1"/>
    <property type="match status" value="1"/>
</dbReference>
<dbReference type="PANTHER" id="PTHR37856:SF1">
    <property type="entry name" value="MAST CELL-EXPRESSED MEMBRANE PROTEIN 1"/>
    <property type="match status" value="1"/>
</dbReference>
<proteinExistence type="evidence at transcript level"/>